<gene>
    <name evidence="1" type="primary">folD</name>
    <name type="ordered locus">PputW619_1739</name>
</gene>
<reference key="1">
    <citation type="submission" date="2008-02" db="EMBL/GenBank/DDBJ databases">
        <title>Complete sequence of Pseudomonas putida W619.</title>
        <authorList>
            <person name="Copeland A."/>
            <person name="Lucas S."/>
            <person name="Lapidus A."/>
            <person name="Barry K."/>
            <person name="Detter J.C."/>
            <person name="Glavina del Rio T."/>
            <person name="Dalin E."/>
            <person name="Tice H."/>
            <person name="Pitluck S."/>
            <person name="Chain P."/>
            <person name="Malfatti S."/>
            <person name="Shin M."/>
            <person name="Vergez L."/>
            <person name="Schmutz J."/>
            <person name="Larimer F."/>
            <person name="Land M."/>
            <person name="Hauser L."/>
            <person name="Kyrpides N."/>
            <person name="Kim E."/>
            <person name="Taghavi S."/>
            <person name="Vangronsveld D."/>
            <person name="van der Lelie D."/>
            <person name="Richardson P."/>
        </authorList>
    </citation>
    <scope>NUCLEOTIDE SEQUENCE [LARGE SCALE GENOMIC DNA]</scope>
    <source>
        <strain>W619</strain>
    </source>
</reference>
<feature type="chain" id="PRO_1000147512" description="Bifunctional protein FolD">
    <location>
        <begin position="1"/>
        <end position="284"/>
    </location>
</feature>
<feature type="binding site" evidence="1">
    <location>
        <begin position="166"/>
        <end position="168"/>
    </location>
    <ligand>
        <name>NADP(+)</name>
        <dbReference type="ChEBI" id="CHEBI:58349"/>
    </ligand>
</feature>
<feature type="binding site" evidence="1">
    <location>
        <position position="232"/>
    </location>
    <ligand>
        <name>NADP(+)</name>
        <dbReference type="ChEBI" id="CHEBI:58349"/>
    </ligand>
</feature>
<dbReference type="EC" id="1.5.1.5" evidence="1"/>
<dbReference type="EC" id="3.5.4.9" evidence="1"/>
<dbReference type="EMBL" id="CP000949">
    <property type="protein sequence ID" value="ACA72243.1"/>
    <property type="molecule type" value="Genomic_DNA"/>
</dbReference>
<dbReference type="SMR" id="B1J675"/>
<dbReference type="STRING" id="390235.PputW619_1739"/>
<dbReference type="KEGG" id="ppw:PputW619_1739"/>
<dbReference type="eggNOG" id="COG0190">
    <property type="taxonomic scope" value="Bacteria"/>
</dbReference>
<dbReference type="HOGENOM" id="CLU_034045_2_1_6"/>
<dbReference type="OrthoDB" id="9803580at2"/>
<dbReference type="UniPathway" id="UPA00193"/>
<dbReference type="GO" id="GO:0005829">
    <property type="term" value="C:cytosol"/>
    <property type="evidence" value="ECO:0007669"/>
    <property type="project" value="TreeGrafter"/>
</dbReference>
<dbReference type="GO" id="GO:0004477">
    <property type="term" value="F:methenyltetrahydrofolate cyclohydrolase activity"/>
    <property type="evidence" value="ECO:0007669"/>
    <property type="project" value="UniProtKB-UniRule"/>
</dbReference>
<dbReference type="GO" id="GO:0004488">
    <property type="term" value="F:methylenetetrahydrofolate dehydrogenase (NADP+) activity"/>
    <property type="evidence" value="ECO:0007669"/>
    <property type="project" value="UniProtKB-UniRule"/>
</dbReference>
<dbReference type="GO" id="GO:0000105">
    <property type="term" value="P:L-histidine biosynthetic process"/>
    <property type="evidence" value="ECO:0007669"/>
    <property type="project" value="UniProtKB-KW"/>
</dbReference>
<dbReference type="GO" id="GO:0009086">
    <property type="term" value="P:methionine biosynthetic process"/>
    <property type="evidence" value="ECO:0007669"/>
    <property type="project" value="UniProtKB-KW"/>
</dbReference>
<dbReference type="GO" id="GO:0006164">
    <property type="term" value="P:purine nucleotide biosynthetic process"/>
    <property type="evidence" value="ECO:0007669"/>
    <property type="project" value="UniProtKB-KW"/>
</dbReference>
<dbReference type="GO" id="GO:0035999">
    <property type="term" value="P:tetrahydrofolate interconversion"/>
    <property type="evidence" value="ECO:0007669"/>
    <property type="project" value="UniProtKB-UniRule"/>
</dbReference>
<dbReference type="CDD" id="cd01080">
    <property type="entry name" value="NAD_bind_m-THF_DH_Cyclohyd"/>
    <property type="match status" value="1"/>
</dbReference>
<dbReference type="FunFam" id="3.40.50.10860:FF:000001">
    <property type="entry name" value="Bifunctional protein FolD"/>
    <property type="match status" value="1"/>
</dbReference>
<dbReference type="FunFam" id="3.40.50.720:FF:000006">
    <property type="entry name" value="Bifunctional protein FolD"/>
    <property type="match status" value="1"/>
</dbReference>
<dbReference type="Gene3D" id="3.40.50.10860">
    <property type="entry name" value="Leucine Dehydrogenase, chain A, domain 1"/>
    <property type="match status" value="1"/>
</dbReference>
<dbReference type="Gene3D" id="3.40.50.720">
    <property type="entry name" value="NAD(P)-binding Rossmann-like Domain"/>
    <property type="match status" value="1"/>
</dbReference>
<dbReference type="HAMAP" id="MF_01576">
    <property type="entry name" value="THF_DHG_CYH"/>
    <property type="match status" value="1"/>
</dbReference>
<dbReference type="InterPro" id="IPR046346">
    <property type="entry name" value="Aminoacid_DH-like_N_sf"/>
</dbReference>
<dbReference type="InterPro" id="IPR036291">
    <property type="entry name" value="NAD(P)-bd_dom_sf"/>
</dbReference>
<dbReference type="InterPro" id="IPR000672">
    <property type="entry name" value="THF_DH/CycHdrlase"/>
</dbReference>
<dbReference type="InterPro" id="IPR020630">
    <property type="entry name" value="THF_DH/CycHdrlase_cat_dom"/>
</dbReference>
<dbReference type="InterPro" id="IPR020631">
    <property type="entry name" value="THF_DH/CycHdrlase_NAD-bd_dom"/>
</dbReference>
<dbReference type="NCBIfam" id="NF008058">
    <property type="entry name" value="PRK10792.1"/>
    <property type="match status" value="1"/>
</dbReference>
<dbReference type="NCBIfam" id="NF010783">
    <property type="entry name" value="PRK14186.1"/>
    <property type="match status" value="1"/>
</dbReference>
<dbReference type="PANTHER" id="PTHR48099:SF5">
    <property type="entry name" value="C-1-TETRAHYDROFOLATE SYNTHASE, CYTOPLASMIC"/>
    <property type="match status" value="1"/>
</dbReference>
<dbReference type="PANTHER" id="PTHR48099">
    <property type="entry name" value="C-1-TETRAHYDROFOLATE SYNTHASE, CYTOPLASMIC-RELATED"/>
    <property type="match status" value="1"/>
</dbReference>
<dbReference type="Pfam" id="PF00763">
    <property type="entry name" value="THF_DHG_CYH"/>
    <property type="match status" value="1"/>
</dbReference>
<dbReference type="Pfam" id="PF02882">
    <property type="entry name" value="THF_DHG_CYH_C"/>
    <property type="match status" value="1"/>
</dbReference>
<dbReference type="PRINTS" id="PR00085">
    <property type="entry name" value="THFDHDRGNASE"/>
</dbReference>
<dbReference type="SUPFAM" id="SSF53223">
    <property type="entry name" value="Aminoacid dehydrogenase-like, N-terminal domain"/>
    <property type="match status" value="1"/>
</dbReference>
<dbReference type="SUPFAM" id="SSF51735">
    <property type="entry name" value="NAD(P)-binding Rossmann-fold domains"/>
    <property type="match status" value="1"/>
</dbReference>
<keyword id="KW-0028">Amino-acid biosynthesis</keyword>
<keyword id="KW-0368">Histidine biosynthesis</keyword>
<keyword id="KW-0378">Hydrolase</keyword>
<keyword id="KW-0486">Methionine biosynthesis</keyword>
<keyword id="KW-0511">Multifunctional enzyme</keyword>
<keyword id="KW-0521">NADP</keyword>
<keyword id="KW-0554">One-carbon metabolism</keyword>
<keyword id="KW-0560">Oxidoreductase</keyword>
<keyword id="KW-0658">Purine biosynthesis</keyword>
<organism>
    <name type="scientific">Pseudomonas putida (strain W619)</name>
    <dbReference type="NCBI Taxonomy" id="390235"/>
    <lineage>
        <taxon>Bacteria</taxon>
        <taxon>Pseudomonadati</taxon>
        <taxon>Pseudomonadota</taxon>
        <taxon>Gammaproteobacteria</taxon>
        <taxon>Pseudomonadales</taxon>
        <taxon>Pseudomonadaceae</taxon>
        <taxon>Pseudomonas</taxon>
    </lineage>
</organism>
<protein>
    <recommendedName>
        <fullName evidence="1">Bifunctional protein FolD</fullName>
    </recommendedName>
    <domain>
        <recommendedName>
            <fullName evidence="1">Methylenetetrahydrofolate dehydrogenase</fullName>
            <ecNumber evidence="1">1.5.1.5</ecNumber>
        </recommendedName>
    </domain>
    <domain>
        <recommendedName>
            <fullName evidence="1">Methenyltetrahydrofolate cyclohydrolase</fullName>
            <ecNumber evidence="1">3.5.4.9</ecNumber>
        </recommendedName>
    </domain>
</protein>
<proteinExistence type="inferred from homology"/>
<accession>B1J675</accession>
<sequence length="284" mass="30681">MTAHLIDGKAIAANLRKQIAQRVEERRQQGLRTPGLAVILVGTDPASQVYVSHKRKDCEEVGFISQAFDLPSETTQQALTELIDRLNDDPAVDGILLQLPLPAHLDASLLLERIRPDKDVDGFHPYNIGRLAQRIPLLRPCTPKGIMTLLESTGQDLYGMNAVIVGASNIVGRPMAMELLLAGCTVTVCHRFTKDLAGHVGRADLVVVAAGKPGLVKGEWVKEGAIVIDVGINRQEDGKLVGDVVYETALPRAGWITPVPGGVGPMTRACLLENTLYAAEELHK</sequence>
<comment type="function">
    <text evidence="1">Catalyzes the oxidation of 5,10-methylenetetrahydrofolate to 5,10-methenyltetrahydrofolate and then the hydrolysis of 5,10-methenyltetrahydrofolate to 10-formyltetrahydrofolate.</text>
</comment>
<comment type="catalytic activity">
    <reaction evidence="1">
        <text>(6R)-5,10-methylene-5,6,7,8-tetrahydrofolate + NADP(+) = (6R)-5,10-methenyltetrahydrofolate + NADPH</text>
        <dbReference type="Rhea" id="RHEA:22812"/>
        <dbReference type="ChEBI" id="CHEBI:15636"/>
        <dbReference type="ChEBI" id="CHEBI:57455"/>
        <dbReference type="ChEBI" id="CHEBI:57783"/>
        <dbReference type="ChEBI" id="CHEBI:58349"/>
        <dbReference type="EC" id="1.5.1.5"/>
    </reaction>
</comment>
<comment type="catalytic activity">
    <reaction evidence="1">
        <text>(6R)-5,10-methenyltetrahydrofolate + H2O = (6R)-10-formyltetrahydrofolate + H(+)</text>
        <dbReference type="Rhea" id="RHEA:23700"/>
        <dbReference type="ChEBI" id="CHEBI:15377"/>
        <dbReference type="ChEBI" id="CHEBI:15378"/>
        <dbReference type="ChEBI" id="CHEBI:57455"/>
        <dbReference type="ChEBI" id="CHEBI:195366"/>
        <dbReference type="EC" id="3.5.4.9"/>
    </reaction>
</comment>
<comment type="pathway">
    <text evidence="1">One-carbon metabolism; tetrahydrofolate interconversion.</text>
</comment>
<comment type="subunit">
    <text evidence="1">Homodimer.</text>
</comment>
<comment type="similarity">
    <text evidence="1">Belongs to the tetrahydrofolate dehydrogenase/cyclohydrolase family.</text>
</comment>
<name>FOLD_PSEPW</name>
<evidence type="ECO:0000255" key="1">
    <source>
        <dbReference type="HAMAP-Rule" id="MF_01576"/>
    </source>
</evidence>